<gene>
    <name evidence="1" type="primary">infA</name>
    <name type="ordered locus">NT01CX_1139</name>
</gene>
<reference key="1">
    <citation type="journal article" date="2006" name="Nat. Biotechnol.">
        <title>The genome and transcriptomes of the anti-tumor agent Clostridium novyi-NT.</title>
        <authorList>
            <person name="Bettegowda C."/>
            <person name="Huang X."/>
            <person name="Lin J."/>
            <person name="Cheong I."/>
            <person name="Kohli M."/>
            <person name="Szabo S.A."/>
            <person name="Zhang X."/>
            <person name="Diaz L.A. Jr."/>
            <person name="Velculescu V.E."/>
            <person name="Parmigiani G."/>
            <person name="Kinzler K.W."/>
            <person name="Vogelstein B."/>
            <person name="Zhou S."/>
        </authorList>
    </citation>
    <scope>NUCLEOTIDE SEQUENCE [LARGE SCALE GENOMIC DNA]</scope>
    <source>
        <strain>NT</strain>
    </source>
</reference>
<comment type="function">
    <text evidence="1">One of the essential components for the initiation of protein synthesis. Stabilizes the binding of IF-2 and IF-3 on the 30S subunit to which N-formylmethionyl-tRNA(fMet) subsequently binds. Helps modulate mRNA selection, yielding the 30S pre-initiation complex (PIC). Upon addition of the 50S ribosomal subunit IF-1, IF-2 and IF-3 are released leaving the mature 70S translation initiation complex.</text>
</comment>
<comment type="subunit">
    <text evidence="1">Component of the 30S ribosomal translation pre-initiation complex which assembles on the 30S ribosome in the order IF-2 and IF-3, IF-1 and N-formylmethionyl-tRNA(fMet); mRNA recruitment can occur at any time during PIC assembly.</text>
</comment>
<comment type="subcellular location">
    <subcellularLocation>
        <location evidence="1">Cytoplasm</location>
    </subcellularLocation>
</comment>
<comment type="similarity">
    <text evidence="1">Belongs to the IF-1 family.</text>
</comment>
<organism>
    <name type="scientific">Clostridium novyi (strain NT)</name>
    <dbReference type="NCBI Taxonomy" id="386415"/>
    <lineage>
        <taxon>Bacteria</taxon>
        <taxon>Bacillati</taxon>
        <taxon>Bacillota</taxon>
        <taxon>Clostridia</taxon>
        <taxon>Eubacteriales</taxon>
        <taxon>Clostridiaceae</taxon>
        <taxon>Clostridium</taxon>
    </lineage>
</organism>
<feature type="chain" id="PRO_0000338807" description="Translation initiation factor IF-1">
    <location>
        <begin position="1"/>
        <end position="72"/>
    </location>
</feature>
<feature type="domain" description="S1-like" evidence="1">
    <location>
        <begin position="1"/>
        <end position="72"/>
    </location>
</feature>
<keyword id="KW-0963">Cytoplasm</keyword>
<keyword id="KW-0396">Initiation factor</keyword>
<keyword id="KW-0648">Protein biosynthesis</keyword>
<keyword id="KW-1185">Reference proteome</keyword>
<keyword id="KW-0694">RNA-binding</keyword>
<keyword id="KW-0699">rRNA-binding</keyword>
<accession>A0PXX0</accession>
<evidence type="ECO:0000255" key="1">
    <source>
        <dbReference type="HAMAP-Rule" id="MF_00075"/>
    </source>
</evidence>
<sequence>MSKDDVIEMQGTVLEALPNAMFQIQLESGQTILGHVSGKLRMNFIRILPGDKVTVELSPYDLSRGRITWRAK</sequence>
<proteinExistence type="inferred from homology"/>
<name>IF1_CLONN</name>
<dbReference type="EMBL" id="CP000382">
    <property type="protein sequence ID" value="ABK61619.1"/>
    <property type="molecule type" value="Genomic_DNA"/>
</dbReference>
<dbReference type="RefSeq" id="WP_003367774.1">
    <property type="nucleotide sequence ID" value="NC_008593.1"/>
</dbReference>
<dbReference type="SMR" id="A0PXX0"/>
<dbReference type="STRING" id="386415.NT01CX_1139"/>
<dbReference type="KEGG" id="cno:NT01CX_1139"/>
<dbReference type="eggNOG" id="COG0361">
    <property type="taxonomic scope" value="Bacteria"/>
</dbReference>
<dbReference type="HOGENOM" id="CLU_151267_1_0_9"/>
<dbReference type="Proteomes" id="UP000008220">
    <property type="component" value="Chromosome"/>
</dbReference>
<dbReference type="GO" id="GO:0005829">
    <property type="term" value="C:cytosol"/>
    <property type="evidence" value="ECO:0007669"/>
    <property type="project" value="TreeGrafter"/>
</dbReference>
<dbReference type="GO" id="GO:0043022">
    <property type="term" value="F:ribosome binding"/>
    <property type="evidence" value="ECO:0007669"/>
    <property type="project" value="UniProtKB-UniRule"/>
</dbReference>
<dbReference type="GO" id="GO:0019843">
    <property type="term" value="F:rRNA binding"/>
    <property type="evidence" value="ECO:0007669"/>
    <property type="project" value="UniProtKB-UniRule"/>
</dbReference>
<dbReference type="GO" id="GO:0003743">
    <property type="term" value="F:translation initiation factor activity"/>
    <property type="evidence" value="ECO:0007669"/>
    <property type="project" value="UniProtKB-UniRule"/>
</dbReference>
<dbReference type="CDD" id="cd04451">
    <property type="entry name" value="S1_IF1"/>
    <property type="match status" value="1"/>
</dbReference>
<dbReference type="FunFam" id="2.40.50.140:FF:000002">
    <property type="entry name" value="Translation initiation factor IF-1"/>
    <property type="match status" value="1"/>
</dbReference>
<dbReference type="Gene3D" id="2.40.50.140">
    <property type="entry name" value="Nucleic acid-binding proteins"/>
    <property type="match status" value="1"/>
</dbReference>
<dbReference type="HAMAP" id="MF_00075">
    <property type="entry name" value="IF_1"/>
    <property type="match status" value="1"/>
</dbReference>
<dbReference type="InterPro" id="IPR012340">
    <property type="entry name" value="NA-bd_OB-fold"/>
</dbReference>
<dbReference type="InterPro" id="IPR006196">
    <property type="entry name" value="RNA-binding_domain_S1_IF1"/>
</dbReference>
<dbReference type="InterPro" id="IPR004368">
    <property type="entry name" value="TIF_IF1"/>
</dbReference>
<dbReference type="NCBIfam" id="TIGR00008">
    <property type="entry name" value="infA"/>
    <property type="match status" value="1"/>
</dbReference>
<dbReference type="PANTHER" id="PTHR33370">
    <property type="entry name" value="TRANSLATION INITIATION FACTOR IF-1, CHLOROPLASTIC"/>
    <property type="match status" value="1"/>
</dbReference>
<dbReference type="PANTHER" id="PTHR33370:SF1">
    <property type="entry name" value="TRANSLATION INITIATION FACTOR IF-1, CHLOROPLASTIC"/>
    <property type="match status" value="1"/>
</dbReference>
<dbReference type="Pfam" id="PF01176">
    <property type="entry name" value="eIF-1a"/>
    <property type="match status" value="1"/>
</dbReference>
<dbReference type="SUPFAM" id="SSF50249">
    <property type="entry name" value="Nucleic acid-binding proteins"/>
    <property type="match status" value="1"/>
</dbReference>
<dbReference type="PROSITE" id="PS50832">
    <property type="entry name" value="S1_IF1_TYPE"/>
    <property type="match status" value="1"/>
</dbReference>
<protein>
    <recommendedName>
        <fullName evidence="1">Translation initiation factor IF-1</fullName>
    </recommendedName>
</protein>